<comment type="function">
    <text evidence="1">Catalyzes the reversible transfer of the terminal phosphate group between ATP and AMP. Plays an important role in cellular energy homeostasis and in adenine nucleotide metabolism.</text>
</comment>
<comment type="catalytic activity">
    <reaction evidence="1">
        <text>AMP + ATP = 2 ADP</text>
        <dbReference type="Rhea" id="RHEA:12973"/>
        <dbReference type="ChEBI" id="CHEBI:30616"/>
        <dbReference type="ChEBI" id="CHEBI:456215"/>
        <dbReference type="ChEBI" id="CHEBI:456216"/>
        <dbReference type="EC" id="2.7.4.3"/>
    </reaction>
</comment>
<comment type="pathway">
    <text evidence="1">Purine metabolism; AMP biosynthesis via salvage pathway; AMP from ADP: step 1/1.</text>
</comment>
<comment type="subunit">
    <text evidence="1">Monomer.</text>
</comment>
<comment type="subcellular location">
    <subcellularLocation>
        <location evidence="1">Cytoplasm</location>
    </subcellularLocation>
</comment>
<comment type="domain">
    <text evidence="1">Consists of three domains, a large central CORE domain and two small peripheral domains, NMPbind and LID, which undergo movements during catalysis. The LID domain closes over the site of phosphoryl transfer upon ATP binding. Assembling and dissambling the active center during each catalytic cycle provides an effective means to prevent ATP hydrolysis. Some bacteria have evolved a zinc-coordinating structure that stabilizes the LID domain.</text>
</comment>
<comment type="similarity">
    <text evidence="1">Belongs to the adenylate kinase family.</text>
</comment>
<name>KAD_BACC3</name>
<dbReference type="EC" id="2.7.4.3" evidence="1"/>
<dbReference type="EMBL" id="CP001407">
    <property type="protein sequence ID" value="ACO30263.1"/>
    <property type="molecule type" value="Genomic_DNA"/>
</dbReference>
<dbReference type="RefSeq" id="WP_001048992.1">
    <property type="nucleotide sequence ID" value="NZ_CP009318.1"/>
</dbReference>
<dbReference type="SMR" id="C1ET60"/>
<dbReference type="KEGG" id="bcx:BCA_0160"/>
<dbReference type="PATRIC" id="fig|572264.18.peg.195"/>
<dbReference type="UniPathway" id="UPA00588">
    <property type="reaction ID" value="UER00649"/>
</dbReference>
<dbReference type="Proteomes" id="UP000002210">
    <property type="component" value="Chromosome"/>
</dbReference>
<dbReference type="GO" id="GO:0005737">
    <property type="term" value="C:cytoplasm"/>
    <property type="evidence" value="ECO:0007669"/>
    <property type="project" value="UniProtKB-SubCell"/>
</dbReference>
<dbReference type="GO" id="GO:0004017">
    <property type="term" value="F:adenylate kinase activity"/>
    <property type="evidence" value="ECO:0007669"/>
    <property type="project" value="UniProtKB-UniRule"/>
</dbReference>
<dbReference type="GO" id="GO:0005524">
    <property type="term" value="F:ATP binding"/>
    <property type="evidence" value="ECO:0007669"/>
    <property type="project" value="UniProtKB-UniRule"/>
</dbReference>
<dbReference type="GO" id="GO:0008270">
    <property type="term" value="F:zinc ion binding"/>
    <property type="evidence" value="ECO:0007669"/>
    <property type="project" value="UniProtKB-UniRule"/>
</dbReference>
<dbReference type="GO" id="GO:0044209">
    <property type="term" value="P:AMP salvage"/>
    <property type="evidence" value="ECO:0007669"/>
    <property type="project" value="UniProtKB-UniRule"/>
</dbReference>
<dbReference type="CDD" id="cd01428">
    <property type="entry name" value="ADK"/>
    <property type="match status" value="1"/>
</dbReference>
<dbReference type="FunFam" id="3.40.50.300:FF:000106">
    <property type="entry name" value="Adenylate kinase mitochondrial"/>
    <property type="match status" value="1"/>
</dbReference>
<dbReference type="Gene3D" id="3.40.50.300">
    <property type="entry name" value="P-loop containing nucleotide triphosphate hydrolases"/>
    <property type="match status" value="1"/>
</dbReference>
<dbReference type="HAMAP" id="MF_00235">
    <property type="entry name" value="Adenylate_kinase_Adk"/>
    <property type="match status" value="1"/>
</dbReference>
<dbReference type="InterPro" id="IPR006259">
    <property type="entry name" value="Adenyl_kin_sub"/>
</dbReference>
<dbReference type="InterPro" id="IPR000850">
    <property type="entry name" value="Adenylat/UMP-CMP_kin"/>
</dbReference>
<dbReference type="InterPro" id="IPR033690">
    <property type="entry name" value="Adenylat_kinase_CS"/>
</dbReference>
<dbReference type="InterPro" id="IPR007862">
    <property type="entry name" value="Adenylate_kinase_lid-dom"/>
</dbReference>
<dbReference type="InterPro" id="IPR027417">
    <property type="entry name" value="P-loop_NTPase"/>
</dbReference>
<dbReference type="NCBIfam" id="TIGR01351">
    <property type="entry name" value="adk"/>
    <property type="match status" value="1"/>
</dbReference>
<dbReference type="NCBIfam" id="NF001380">
    <property type="entry name" value="PRK00279.1-2"/>
    <property type="match status" value="1"/>
</dbReference>
<dbReference type="NCBIfam" id="NF001381">
    <property type="entry name" value="PRK00279.1-3"/>
    <property type="match status" value="1"/>
</dbReference>
<dbReference type="NCBIfam" id="NF011100">
    <property type="entry name" value="PRK14527.1"/>
    <property type="match status" value="1"/>
</dbReference>
<dbReference type="PANTHER" id="PTHR23359">
    <property type="entry name" value="NUCLEOTIDE KINASE"/>
    <property type="match status" value="1"/>
</dbReference>
<dbReference type="Pfam" id="PF00406">
    <property type="entry name" value="ADK"/>
    <property type="match status" value="1"/>
</dbReference>
<dbReference type="Pfam" id="PF05191">
    <property type="entry name" value="ADK_lid"/>
    <property type="match status" value="1"/>
</dbReference>
<dbReference type="PRINTS" id="PR00094">
    <property type="entry name" value="ADENYLTKNASE"/>
</dbReference>
<dbReference type="SUPFAM" id="SSF52540">
    <property type="entry name" value="P-loop containing nucleoside triphosphate hydrolases"/>
    <property type="match status" value="1"/>
</dbReference>
<dbReference type="PROSITE" id="PS00113">
    <property type="entry name" value="ADENYLATE_KINASE"/>
    <property type="match status" value="1"/>
</dbReference>
<organism>
    <name type="scientific">Bacillus cereus (strain 03BB102)</name>
    <dbReference type="NCBI Taxonomy" id="572264"/>
    <lineage>
        <taxon>Bacteria</taxon>
        <taxon>Bacillati</taxon>
        <taxon>Bacillota</taxon>
        <taxon>Bacilli</taxon>
        <taxon>Bacillales</taxon>
        <taxon>Bacillaceae</taxon>
        <taxon>Bacillus</taxon>
        <taxon>Bacillus cereus group</taxon>
    </lineage>
</organism>
<gene>
    <name evidence="1" type="primary">adk</name>
    <name type="ordered locus">BCA_0160</name>
</gene>
<evidence type="ECO:0000255" key="1">
    <source>
        <dbReference type="HAMAP-Rule" id="MF_00235"/>
    </source>
</evidence>
<keyword id="KW-0067">ATP-binding</keyword>
<keyword id="KW-0963">Cytoplasm</keyword>
<keyword id="KW-0418">Kinase</keyword>
<keyword id="KW-0479">Metal-binding</keyword>
<keyword id="KW-0545">Nucleotide biosynthesis</keyword>
<keyword id="KW-0547">Nucleotide-binding</keyword>
<keyword id="KW-0808">Transferase</keyword>
<keyword id="KW-0862">Zinc</keyword>
<feature type="chain" id="PRO_1000191122" description="Adenylate kinase">
    <location>
        <begin position="1"/>
        <end position="216"/>
    </location>
</feature>
<feature type="region of interest" description="NMP" evidence="1">
    <location>
        <begin position="30"/>
        <end position="59"/>
    </location>
</feature>
<feature type="region of interest" description="LID" evidence="1">
    <location>
        <begin position="126"/>
        <end position="163"/>
    </location>
</feature>
<feature type="binding site" evidence="1">
    <location>
        <begin position="10"/>
        <end position="15"/>
    </location>
    <ligand>
        <name>ATP</name>
        <dbReference type="ChEBI" id="CHEBI:30616"/>
    </ligand>
</feature>
<feature type="binding site" evidence="1">
    <location>
        <position position="31"/>
    </location>
    <ligand>
        <name>AMP</name>
        <dbReference type="ChEBI" id="CHEBI:456215"/>
    </ligand>
</feature>
<feature type="binding site" evidence="1">
    <location>
        <position position="36"/>
    </location>
    <ligand>
        <name>AMP</name>
        <dbReference type="ChEBI" id="CHEBI:456215"/>
    </ligand>
</feature>
<feature type="binding site" evidence="1">
    <location>
        <begin position="57"/>
        <end position="59"/>
    </location>
    <ligand>
        <name>AMP</name>
        <dbReference type="ChEBI" id="CHEBI:456215"/>
    </ligand>
</feature>
<feature type="binding site" evidence="1">
    <location>
        <begin position="85"/>
        <end position="88"/>
    </location>
    <ligand>
        <name>AMP</name>
        <dbReference type="ChEBI" id="CHEBI:456215"/>
    </ligand>
</feature>
<feature type="binding site" evidence="1">
    <location>
        <position position="92"/>
    </location>
    <ligand>
        <name>AMP</name>
        <dbReference type="ChEBI" id="CHEBI:456215"/>
    </ligand>
</feature>
<feature type="binding site" evidence="1">
    <location>
        <position position="127"/>
    </location>
    <ligand>
        <name>ATP</name>
        <dbReference type="ChEBI" id="CHEBI:30616"/>
    </ligand>
</feature>
<feature type="binding site" evidence="1">
    <location>
        <position position="130"/>
    </location>
    <ligand>
        <name>Zn(2+)</name>
        <dbReference type="ChEBI" id="CHEBI:29105"/>
        <note>structural</note>
    </ligand>
</feature>
<feature type="binding site" evidence="1">
    <location>
        <position position="133"/>
    </location>
    <ligand>
        <name>Zn(2+)</name>
        <dbReference type="ChEBI" id="CHEBI:29105"/>
        <note>structural</note>
    </ligand>
</feature>
<feature type="binding site" evidence="1">
    <location>
        <begin position="136"/>
        <end position="137"/>
    </location>
    <ligand>
        <name>ATP</name>
        <dbReference type="ChEBI" id="CHEBI:30616"/>
    </ligand>
</feature>
<feature type="binding site" evidence="1">
    <location>
        <position position="150"/>
    </location>
    <ligand>
        <name>Zn(2+)</name>
        <dbReference type="ChEBI" id="CHEBI:29105"/>
        <note>structural</note>
    </ligand>
</feature>
<feature type="binding site" evidence="1">
    <location>
        <position position="153"/>
    </location>
    <ligand>
        <name>Zn(2+)</name>
        <dbReference type="ChEBI" id="CHEBI:29105"/>
        <note>structural</note>
    </ligand>
</feature>
<feature type="binding site" evidence="1">
    <location>
        <position position="160"/>
    </location>
    <ligand>
        <name>AMP</name>
        <dbReference type="ChEBI" id="CHEBI:456215"/>
    </ligand>
</feature>
<feature type="binding site" evidence="1">
    <location>
        <position position="171"/>
    </location>
    <ligand>
        <name>AMP</name>
        <dbReference type="ChEBI" id="CHEBI:456215"/>
    </ligand>
</feature>
<feature type="binding site" evidence="1">
    <location>
        <position position="199"/>
    </location>
    <ligand>
        <name>ATP</name>
        <dbReference type="ChEBI" id="CHEBI:30616"/>
    </ligand>
</feature>
<accession>C1ET60</accession>
<protein>
    <recommendedName>
        <fullName evidence="1">Adenylate kinase</fullName>
        <shortName evidence="1">AK</shortName>
        <ecNumber evidence="1">2.7.4.3</ecNumber>
    </recommendedName>
    <alternativeName>
        <fullName evidence="1">ATP-AMP transphosphorylase</fullName>
    </alternativeName>
    <alternativeName>
        <fullName evidence="1">ATP:AMP phosphotransferase</fullName>
    </alternativeName>
    <alternativeName>
        <fullName evidence="1">Adenylate monophosphate kinase</fullName>
    </alternativeName>
</protein>
<sequence length="216" mass="23743">MNLILMGLPGAGKGTQAEQIVAKYNIPHISTGDMFRAAMKAETEMGLQAKSFIDKGALVPDEVTIGIVRERLSQEDCVRGFLLDGFPRTVAQASALEEIMKDLGKKIDYVLNINVDSGLLLKRLTGRRICKECGATYHLEFNAPAKADVCDKCGGELYQRSDDNEETVANRLDVNIKQTKPLLDFYEELGYLQSINGEQDINKVFADIDVLIGGLA</sequence>
<reference key="1">
    <citation type="submission" date="2009-02" db="EMBL/GenBank/DDBJ databases">
        <title>Genome sequence of Bacillus cereus 03BB102.</title>
        <authorList>
            <person name="Dodson R.J."/>
            <person name="Jackson P."/>
            <person name="Munk A.C."/>
            <person name="Brettin T."/>
            <person name="Bruce D."/>
            <person name="Detter C."/>
            <person name="Tapia R."/>
            <person name="Han C."/>
            <person name="Sutton G."/>
            <person name="Sims D."/>
        </authorList>
    </citation>
    <scope>NUCLEOTIDE SEQUENCE [LARGE SCALE GENOMIC DNA]</scope>
    <source>
        <strain>03BB102</strain>
    </source>
</reference>
<proteinExistence type="inferred from homology"/>